<proteinExistence type="inferred from homology"/>
<feature type="chain" id="PRO_0000392648" description="Cysteate synthase">
    <location>
        <begin position="1"/>
        <end position="424"/>
    </location>
</feature>
<feature type="binding site" evidence="1">
    <location>
        <position position="132"/>
    </location>
    <ligand>
        <name>pyridoxal 5'-phosphate</name>
        <dbReference type="ChEBI" id="CHEBI:597326"/>
    </ligand>
</feature>
<feature type="binding site" evidence="1">
    <location>
        <position position="381"/>
    </location>
    <ligand>
        <name>pyridoxal 5'-phosphate</name>
        <dbReference type="ChEBI" id="CHEBI:597326"/>
    </ligand>
</feature>
<feature type="modified residue" description="N6-(pyridoxal phosphate)lysine" evidence="1">
    <location>
        <position position="106"/>
    </location>
</feature>
<sequence>MIPKYRIRCISGGEIVPDITSLSCPAGHDSLLRTEYTSRRLQLSYHSGIFRYLCWLPVTAPLLPSGGPVTFTSDELSRELGLSRLAISFSGYSPEHHASLTTGSFKELEALATLQRLWELGKKIPVIASAGNTGRAFAGLSAQYGKPVVVVVPSSAVSRLWTTTPAQDVFLVAVDGDYTDAIAVSTALATVPGCVPEGGARNVARRDGMGTTVLDAAVTLGRIPDHYFQAVGSGTGAIAAWEAALRLIGDGRYGTKLPRLHLAQNKPFTPIVLAWQQRRRTFKPELDMPDAPNAIKEVMSPVLTNRSPPYGIGGGLFDALQATEGQMYAVSNDEGKKGMALIRDTLGIDPDPAAAVATAALVQAAAAGTVGPDDSILLNITGGGYERIREDYTLYPIEPSVTVNQHETGDTLKAELSRWVAHYG</sequence>
<comment type="function">
    <text evidence="1">Specifically catalyzes the beta-elimination of phosphate from L-phosphoserine and the beta-addition of sulfite to the dehydroalanine intermediate to produce L-cysteate.</text>
</comment>
<comment type="catalytic activity">
    <reaction evidence="1">
        <text>O-phospho-L-serine + sulfite + H(+) = L-cysteate + phosphate</text>
        <dbReference type="Rhea" id="RHEA:26486"/>
        <dbReference type="ChEBI" id="CHEBI:15378"/>
        <dbReference type="ChEBI" id="CHEBI:17359"/>
        <dbReference type="ChEBI" id="CHEBI:43474"/>
        <dbReference type="ChEBI" id="CHEBI:57524"/>
        <dbReference type="ChEBI" id="CHEBI:58090"/>
        <dbReference type="EC" id="2.5.1.76"/>
    </reaction>
</comment>
<comment type="cofactor">
    <cofactor evidence="1">
        <name>pyridoxal 5'-phosphate</name>
        <dbReference type="ChEBI" id="CHEBI:597326"/>
    </cofactor>
</comment>
<comment type="pathway">
    <text evidence="1">Cofactor biosynthesis; coenzyme M biosynthesis.</text>
</comment>
<comment type="subunit">
    <text evidence="1">Homotrimer.</text>
</comment>
<comment type="similarity">
    <text evidence="1">Belongs to the threonine synthase family. Cysteate synthase subfamily.</text>
</comment>
<reference key="1">
    <citation type="journal article" date="2015" name="Microbiology">
        <title>Genome of Methanoregula boonei 6A8 reveals adaptations to oligotrophic peatland environments.</title>
        <authorList>
            <person name="Braeuer S."/>
            <person name="Cadillo-Quiroz H."/>
            <person name="Kyrpides N."/>
            <person name="Woyke T."/>
            <person name="Goodwin L."/>
            <person name="Detter C."/>
            <person name="Podell S."/>
            <person name="Yavitt J.B."/>
            <person name="Zinder S.H."/>
        </authorList>
    </citation>
    <scope>NUCLEOTIDE SEQUENCE [LARGE SCALE GENOMIC DNA]</scope>
    <source>
        <strain>DSM 21154 / JCM 14090 / 6A8</strain>
    </source>
</reference>
<organism>
    <name type="scientific">Methanoregula boonei (strain DSM 21154 / JCM 14090 / 6A8)</name>
    <dbReference type="NCBI Taxonomy" id="456442"/>
    <lineage>
        <taxon>Archaea</taxon>
        <taxon>Methanobacteriati</taxon>
        <taxon>Methanobacteriota</taxon>
        <taxon>Stenosarchaea group</taxon>
        <taxon>Methanomicrobia</taxon>
        <taxon>Methanomicrobiales</taxon>
        <taxon>Methanoregulaceae</taxon>
        <taxon>Methanoregula</taxon>
    </lineage>
</organism>
<keyword id="KW-0174">Coenzyme M biosynthesis</keyword>
<keyword id="KW-0663">Pyridoxal phosphate</keyword>
<keyword id="KW-1185">Reference proteome</keyword>
<keyword id="KW-0808">Transferase</keyword>
<accession>A7IA69</accession>
<evidence type="ECO:0000255" key="1">
    <source>
        <dbReference type="HAMAP-Rule" id="MF_02109"/>
    </source>
</evidence>
<dbReference type="EC" id="2.5.1.76" evidence="1"/>
<dbReference type="EMBL" id="CP000780">
    <property type="protein sequence ID" value="ABS56630.1"/>
    <property type="molecule type" value="Genomic_DNA"/>
</dbReference>
<dbReference type="RefSeq" id="WP_012107688.1">
    <property type="nucleotide sequence ID" value="NC_009712.1"/>
</dbReference>
<dbReference type="SMR" id="A7IA69"/>
<dbReference type="STRING" id="456442.Mboo_2116"/>
<dbReference type="GeneID" id="5411214"/>
<dbReference type="KEGG" id="mbn:Mboo_2116"/>
<dbReference type="eggNOG" id="arCOG01434">
    <property type="taxonomic scope" value="Archaea"/>
</dbReference>
<dbReference type="HOGENOM" id="CLU_666687_0_0_2"/>
<dbReference type="OrthoDB" id="6371at2157"/>
<dbReference type="UniPathway" id="UPA00355"/>
<dbReference type="Proteomes" id="UP000002408">
    <property type="component" value="Chromosome"/>
</dbReference>
<dbReference type="GO" id="GO:0044686">
    <property type="term" value="F:cysteate synthase activity"/>
    <property type="evidence" value="ECO:0007669"/>
    <property type="project" value="UniProtKB-UniRule"/>
</dbReference>
<dbReference type="GO" id="GO:0030170">
    <property type="term" value="F:pyridoxal phosphate binding"/>
    <property type="evidence" value="ECO:0007669"/>
    <property type="project" value="UniProtKB-UniRule"/>
</dbReference>
<dbReference type="GO" id="GO:0019295">
    <property type="term" value="P:coenzyme M biosynthetic process"/>
    <property type="evidence" value="ECO:0007669"/>
    <property type="project" value="UniProtKB-UniRule"/>
</dbReference>
<dbReference type="Gene3D" id="3.40.50.1100">
    <property type="match status" value="2"/>
</dbReference>
<dbReference type="HAMAP" id="MF_02109">
    <property type="entry name" value="Cya_synthase"/>
    <property type="match status" value="1"/>
</dbReference>
<dbReference type="InterPro" id="IPR022401">
    <property type="entry name" value="Cysteate_synthase"/>
</dbReference>
<dbReference type="InterPro" id="IPR001926">
    <property type="entry name" value="TrpB-like_PALP"/>
</dbReference>
<dbReference type="InterPro" id="IPR036052">
    <property type="entry name" value="TrpB-like_PALP_sf"/>
</dbReference>
<dbReference type="NCBIfam" id="TIGR03844">
    <property type="entry name" value="cysteate_syn"/>
    <property type="match status" value="1"/>
</dbReference>
<dbReference type="Pfam" id="PF00291">
    <property type="entry name" value="PALP"/>
    <property type="match status" value="1"/>
</dbReference>
<dbReference type="SUPFAM" id="SSF53686">
    <property type="entry name" value="Tryptophan synthase beta subunit-like PLP-dependent enzymes"/>
    <property type="match status" value="1"/>
</dbReference>
<name>CYAS_METB6</name>
<gene>
    <name type="ordered locus">Mboo_2116</name>
</gene>
<protein>
    <recommendedName>
        <fullName evidence="1">Cysteate synthase</fullName>
        <shortName evidence="1">CS</shortName>
        <shortName evidence="1">Cya synthase</shortName>
        <ecNumber evidence="1">2.5.1.76</ecNumber>
    </recommendedName>
</protein>